<organism>
    <name type="scientific">Leptospira interrogans serogroup Icterohaemorrhagiae serovar Lai (strain 56601)</name>
    <dbReference type="NCBI Taxonomy" id="189518"/>
    <lineage>
        <taxon>Bacteria</taxon>
        <taxon>Pseudomonadati</taxon>
        <taxon>Spirochaetota</taxon>
        <taxon>Spirochaetia</taxon>
        <taxon>Leptospirales</taxon>
        <taxon>Leptospiraceae</taxon>
        <taxon>Leptospira</taxon>
    </lineage>
</organism>
<dbReference type="EC" id="2.1.1.163" evidence="1"/>
<dbReference type="EMBL" id="AE010301">
    <property type="protein sequence ID" value="AAN51774.1"/>
    <property type="molecule type" value="Genomic_DNA"/>
</dbReference>
<dbReference type="RefSeq" id="NP_714759.1">
    <property type="nucleotide sequence ID" value="NC_004343.2"/>
</dbReference>
<dbReference type="RefSeq" id="WP_000012765.1">
    <property type="nucleotide sequence ID" value="NC_004343.2"/>
</dbReference>
<dbReference type="SMR" id="Q8EXJ3"/>
<dbReference type="FunCoup" id="Q8EXJ3">
    <property type="interactions" value="401"/>
</dbReference>
<dbReference type="STRING" id="189518.LB_215"/>
<dbReference type="PaxDb" id="189518-LB_215"/>
<dbReference type="EnsemblBacteria" id="AAN51774">
    <property type="protein sequence ID" value="AAN51774"/>
    <property type="gene ID" value="LB_215"/>
</dbReference>
<dbReference type="KEGG" id="lil:LB_215"/>
<dbReference type="PATRIC" id="fig|189518.3.peg.4541"/>
<dbReference type="HOGENOM" id="CLU_037990_0_0_12"/>
<dbReference type="InParanoid" id="Q8EXJ3"/>
<dbReference type="OrthoDB" id="9808140at2"/>
<dbReference type="UniPathway" id="UPA00079">
    <property type="reaction ID" value="UER00169"/>
</dbReference>
<dbReference type="Proteomes" id="UP000001408">
    <property type="component" value="Chromosome II"/>
</dbReference>
<dbReference type="GO" id="GO:0043770">
    <property type="term" value="F:demethylmenaquinone methyltransferase activity"/>
    <property type="evidence" value="ECO:0007669"/>
    <property type="project" value="UniProtKB-UniRule"/>
</dbReference>
<dbReference type="GO" id="GO:0008168">
    <property type="term" value="F:methyltransferase activity"/>
    <property type="evidence" value="ECO:0000318"/>
    <property type="project" value="GO_Central"/>
</dbReference>
<dbReference type="GO" id="GO:0009234">
    <property type="term" value="P:menaquinone biosynthetic process"/>
    <property type="evidence" value="ECO:0007669"/>
    <property type="project" value="UniProtKB-UniRule"/>
</dbReference>
<dbReference type="GO" id="GO:0032259">
    <property type="term" value="P:methylation"/>
    <property type="evidence" value="ECO:0007669"/>
    <property type="project" value="UniProtKB-KW"/>
</dbReference>
<dbReference type="CDD" id="cd02440">
    <property type="entry name" value="AdoMet_MTases"/>
    <property type="match status" value="1"/>
</dbReference>
<dbReference type="Gene3D" id="3.40.50.150">
    <property type="entry name" value="Vaccinia Virus protein VP39"/>
    <property type="match status" value="1"/>
</dbReference>
<dbReference type="HAMAP" id="MF_01813">
    <property type="entry name" value="MenG_UbiE_methyltr"/>
    <property type="match status" value="1"/>
</dbReference>
<dbReference type="InterPro" id="IPR029063">
    <property type="entry name" value="SAM-dependent_MTases_sf"/>
</dbReference>
<dbReference type="InterPro" id="IPR004033">
    <property type="entry name" value="UbiE/COQ5_MeTrFase"/>
</dbReference>
<dbReference type="InterPro" id="IPR023576">
    <property type="entry name" value="UbiE/COQ5_MeTrFase_CS"/>
</dbReference>
<dbReference type="NCBIfam" id="TIGR01934">
    <property type="entry name" value="MenG_MenH_UbiE"/>
    <property type="match status" value="1"/>
</dbReference>
<dbReference type="PANTHER" id="PTHR43591:SF24">
    <property type="entry name" value="2-METHOXY-6-POLYPRENYL-1,4-BENZOQUINOL METHYLASE, MITOCHONDRIAL"/>
    <property type="match status" value="1"/>
</dbReference>
<dbReference type="PANTHER" id="PTHR43591">
    <property type="entry name" value="METHYLTRANSFERASE"/>
    <property type="match status" value="1"/>
</dbReference>
<dbReference type="Pfam" id="PF01209">
    <property type="entry name" value="Ubie_methyltran"/>
    <property type="match status" value="1"/>
</dbReference>
<dbReference type="SUPFAM" id="SSF53335">
    <property type="entry name" value="S-adenosyl-L-methionine-dependent methyltransferases"/>
    <property type="match status" value="1"/>
</dbReference>
<dbReference type="PROSITE" id="PS51608">
    <property type="entry name" value="SAM_MT_UBIE"/>
    <property type="match status" value="1"/>
</dbReference>
<dbReference type="PROSITE" id="PS01183">
    <property type="entry name" value="UBIE_1"/>
    <property type="match status" value="1"/>
</dbReference>
<dbReference type="PROSITE" id="PS01184">
    <property type="entry name" value="UBIE_2"/>
    <property type="match status" value="1"/>
</dbReference>
<feature type="chain" id="PRO_0000193290" description="Demethylmenaquinone methyltransferase">
    <location>
        <begin position="1"/>
        <end position="249"/>
    </location>
</feature>
<feature type="binding site" evidence="1">
    <location>
        <position position="67"/>
    </location>
    <ligand>
        <name>S-adenosyl-L-methionine</name>
        <dbReference type="ChEBI" id="CHEBI:59789"/>
    </ligand>
</feature>
<feature type="binding site" evidence="1">
    <location>
        <position position="87"/>
    </location>
    <ligand>
        <name>S-adenosyl-L-methionine</name>
        <dbReference type="ChEBI" id="CHEBI:59789"/>
    </ligand>
</feature>
<feature type="binding site" evidence="1">
    <location>
        <begin position="115"/>
        <end position="116"/>
    </location>
    <ligand>
        <name>S-adenosyl-L-methionine</name>
        <dbReference type="ChEBI" id="CHEBI:59789"/>
    </ligand>
</feature>
<keyword id="KW-0474">Menaquinone biosynthesis</keyword>
<keyword id="KW-0489">Methyltransferase</keyword>
<keyword id="KW-1185">Reference proteome</keyword>
<keyword id="KW-0949">S-adenosyl-L-methionine</keyword>
<keyword id="KW-0808">Transferase</keyword>
<name>MENG_LEPIN</name>
<evidence type="ECO:0000255" key="1">
    <source>
        <dbReference type="HAMAP-Rule" id="MF_01813"/>
    </source>
</evidence>
<reference key="1">
    <citation type="journal article" date="2003" name="Nature">
        <title>Unique physiological and pathogenic features of Leptospira interrogans revealed by whole-genome sequencing.</title>
        <authorList>
            <person name="Ren S.-X."/>
            <person name="Fu G."/>
            <person name="Jiang X.-G."/>
            <person name="Zeng R."/>
            <person name="Miao Y.-G."/>
            <person name="Xu H."/>
            <person name="Zhang Y.-X."/>
            <person name="Xiong H."/>
            <person name="Lu G."/>
            <person name="Lu L.-F."/>
            <person name="Jiang H.-Q."/>
            <person name="Jia J."/>
            <person name="Tu Y.-F."/>
            <person name="Jiang J.-X."/>
            <person name="Gu W.-Y."/>
            <person name="Zhang Y.-Q."/>
            <person name="Cai Z."/>
            <person name="Sheng H.-H."/>
            <person name="Yin H.-F."/>
            <person name="Zhang Y."/>
            <person name="Zhu G.-F."/>
            <person name="Wan M."/>
            <person name="Huang H.-L."/>
            <person name="Qian Z."/>
            <person name="Wang S.-Y."/>
            <person name="Ma W."/>
            <person name="Yao Z.-J."/>
            <person name="Shen Y."/>
            <person name="Qiang B.-Q."/>
            <person name="Xia Q.-C."/>
            <person name="Guo X.-K."/>
            <person name="Danchin A."/>
            <person name="Saint Girons I."/>
            <person name="Somerville R.L."/>
            <person name="Wen Y.-M."/>
            <person name="Shi M.-H."/>
            <person name="Chen Z."/>
            <person name="Xu J.-G."/>
            <person name="Zhao G.-P."/>
        </authorList>
    </citation>
    <scope>NUCLEOTIDE SEQUENCE [LARGE SCALE GENOMIC DNA]</scope>
    <source>
        <strain>56601</strain>
    </source>
</reference>
<accession>Q8EXJ3</accession>
<sequence>MSGFQMPQANFKAGFVRENFNKIAKKYDRFNDWNSFLLHRVWKNHLVREIENNFSGHLHVLDLCCGTGDISLRLENSSFVDHVTCVDFSENMLEIAKTRLKKQAQKGRVHFELGDATKLIQFQNSQFDVVSIGFGLRNVDNLSKAIGEIFRVLKPGGMFLNLDVGKVKNPWIRWIADFYFFKIVPILGYILWGGKNEMFDYLPVSSLSYPDQETLQLILEKEGFQRVQYKNFVFGNVVLHVAKKPSEKT</sequence>
<proteinExistence type="inferred from homology"/>
<gene>
    <name evidence="1" type="primary">menG</name>
    <name type="ordered locus">LB_215</name>
</gene>
<comment type="function">
    <text evidence="1">Methyltransferase required for the conversion of demethylmenaquinol (DMKH2) to menaquinol (MKH2).</text>
</comment>
<comment type="catalytic activity">
    <reaction evidence="1">
        <text>a 2-demethylmenaquinol + S-adenosyl-L-methionine = a menaquinol + S-adenosyl-L-homocysteine + H(+)</text>
        <dbReference type="Rhea" id="RHEA:42640"/>
        <dbReference type="Rhea" id="RHEA-COMP:9539"/>
        <dbReference type="Rhea" id="RHEA-COMP:9563"/>
        <dbReference type="ChEBI" id="CHEBI:15378"/>
        <dbReference type="ChEBI" id="CHEBI:18151"/>
        <dbReference type="ChEBI" id="CHEBI:55437"/>
        <dbReference type="ChEBI" id="CHEBI:57856"/>
        <dbReference type="ChEBI" id="CHEBI:59789"/>
        <dbReference type="EC" id="2.1.1.163"/>
    </reaction>
</comment>
<comment type="pathway">
    <text evidence="1">Quinol/quinone metabolism; menaquinone biosynthesis; menaquinol from 1,4-dihydroxy-2-naphthoate: step 2/2.</text>
</comment>
<comment type="similarity">
    <text evidence="1">Belongs to the class I-like SAM-binding methyltransferase superfamily. MenG/UbiE family.</text>
</comment>
<protein>
    <recommendedName>
        <fullName evidence="1">Demethylmenaquinone methyltransferase</fullName>
        <ecNumber evidence="1">2.1.1.163</ecNumber>
    </recommendedName>
</protein>